<evidence type="ECO:0000255" key="1">
    <source>
        <dbReference type="HAMAP-Rule" id="MF_00818"/>
    </source>
</evidence>
<dbReference type="EC" id="1.7.1.13" evidence="1"/>
<dbReference type="EMBL" id="CP001275">
    <property type="protein sequence ID" value="ACM05132.1"/>
    <property type="molecule type" value="Genomic_DNA"/>
</dbReference>
<dbReference type="RefSeq" id="WP_015922622.1">
    <property type="nucleotide sequence ID" value="NC_011959.1"/>
</dbReference>
<dbReference type="SMR" id="B9L0W9"/>
<dbReference type="STRING" id="309801.trd_1679"/>
<dbReference type="KEGG" id="tro:trd_1679"/>
<dbReference type="eggNOG" id="COG0780">
    <property type="taxonomic scope" value="Bacteria"/>
</dbReference>
<dbReference type="HOGENOM" id="CLU_102489_1_0_0"/>
<dbReference type="OrthoDB" id="9795077at2"/>
<dbReference type="UniPathway" id="UPA00392"/>
<dbReference type="Proteomes" id="UP000000447">
    <property type="component" value="Chromosome"/>
</dbReference>
<dbReference type="GO" id="GO:0005737">
    <property type="term" value="C:cytoplasm"/>
    <property type="evidence" value="ECO:0007669"/>
    <property type="project" value="UniProtKB-SubCell"/>
</dbReference>
<dbReference type="GO" id="GO:0033739">
    <property type="term" value="F:preQ1 synthase activity"/>
    <property type="evidence" value="ECO:0007669"/>
    <property type="project" value="UniProtKB-UniRule"/>
</dbReference>
<dbReference type="GO" id="GO:0008616">
    <property type="term" value="P:queuosine biosynthetic process"/>
    <property type="evidence" value="ECO:0007669"/>
    <property type="project" value="UniProtKB-UniRule"/>
</dbReference>
<dbReference type="GO" id="GO:0006400">
    <property type="term" value="P:tRNA modification"/>
    <property type="evidence" value="ECO:0007669"/>
    <property type="project" value="UniProtKB-UniRule"/>
</dbReference>
<dbReference type="Gene3D" id="3.30.1130.10">
    <property type="match status" value="1"/>
</dbReference>
<dbReference type="HAMAP" id="MF_00818">
    <property type="entry name" value="QueF_type1"/>
    <property type="match status" value="1"/>
</dbReference>
<dbReference type="InterPro" id="IPR043133">
    <property type="entry name" value="GTP-CH-I_C/QueF"/>
</dbReference>
<dbReference type="InterPro" id="IPR050084">
    <property type="entry name" value="NADPH_dep_7-cyano-7-deazaG_red"/>
</dbReference>
<dbReference type="InterPro" id="IPR029500">
    <property type="entry name" value="QueF"/>
</dbReference>
<dbReference type="InterPro" id="IPR016856">
    <property type="entry name" value="QueF_type1"/>
</dbReference>
<dbReference type="NCBIfam" id="TIGR03139">
    <property type="entry name" value="QueF-II"/>
    <property type="match status" value="1"/>
</dbReference>
<dbReference type="PANTHER" id="PTHR34354">
    <property type="entry name" value="NADPH-DEPENDENT 7-CYANO-7-DEAZAGUANINE REDUCTASE"/>
    <property type="match status" value="1"/>
</dbReference>
<dbReference type="PANTHER" id="PTHR34354:SF1">
    <property type="entry name" value="NADPH-DEPENDENT 7-CYANO-7-DEAZAGUANINE REDUCTASE"/>
    <property type="match status" value="1"/>
</dbReference>
<dbReference type="Pfam" id="PF14489">
    <property type="entry name" value="QueF"/>
    <property type="match status" value="1"/>
</dbReference>
<dbReference type="PIRSF" id="PIRSF027377">
    <property type="entry name" value="Nitrile_oxidored_QueF"/>
    <property type="match status" value="1"/>
</dbReference>
<dbReference type="SUPFAM" id="SSF55620">
    <property type="entry name" value="Tetrahydrobiopterin biosynthesis enzymes-like"/>
    <property type="match status" value="1"/>
</dbReference>
<organism>
    <name type="scientific">Thermomicrobium roseum (strain ATCC 27502 / DSM 5159 / P-2)</name>
    <dbReference type="NCBI Taxonomy" id="309801"/>
    <lineage>
        <taxon>Bacteria</taxon>
        <taxon>Pseudomonadati</taxon>
        <taxon>Thermomicrobiota</taxon>
        <taxon>Thermomicrobia</taxon>
        <taxon>Thermomicrobiales</taxon>
        <taxon>Thermomicrobiaceae</taxon>
        <taxon>Thermomicrobium</taxon>
    </lineage>
</organism>
<comment type="function">
    <text evidence="1">Catalyzes the NADPH-dependent reduction of 7-cyano-7-deazaguanine (preQ0) to 7-aminomethyl-7-deazaguanine (preQ1).</text>
</comment>
<comment type="catalytic activity">
    <reaction evidence="1">
        <text>7-aminomethyl-7-carbaguanine + 2 NADP(+) = 7-cyano-7-deazaguanine + 2 NADPH + 3 H(+)</text>
        <dbReference type="Rhea" id="RHEA:13409"/>
        <dbReference type="ChEBI" id="CHEBI:15378"/>
        <dbReference type="ChEBI" id="CHEBI:45075"/>
        <dbReference type="ChEBI" id="CHEBI:57783"/>
        <dbReference type="ChEBI" id="CHEBI:58349"/>
        <dbReference type="ChEBI" id="CHEBI:58703"/>
        <dbReference type="EC" id="1.7.1.13"/>
    </reaction>
</comment>
<comment type="pathway">
    <text evidence="1">tRNA modification; tRNA-queuosine biosynthesis.</text>
</comment>
<comment type="subcellular location">
    <subcellularLocation>
        <location evidence="1">Cytoplasm</location>
    </subcellularLocation>
</comment>
<comment type="similarity">
    <text evidence="1">Belongs to the GTP cyclohydrolase I family. QueF type 1 subfamily.</text>
</comment>
<sequence>MPTQPSKELERIPNPKPERDYEIEITTNEFTCVCPRTGQPDFATITIRYVPDQWIVELKSLKLYLWSYRNEGHYHEEVTNTILDDLVRTLEPRRMTVIADFNIRGGLHTVVTARYERTAEGPARLAAD</sequence>
<protein>
    <recommendedName>
        <fullName evidence="1">NADPH-dependent 7-cyano-7-deazaguanine reductase</fullName>
        <ecNumber evidence="1">1.7.1.13</ecNumber>
    </recommendedName>
    <alternativeName>
        <fullName evidence="1">7-cyano-7-carbaguanine reductase</fullName>
    </alternativeName>
    <alternativeName>
        <fullName evidence="1">NADPH-dependent nitrile oxidoreductase</fullName>
    </alternativeName>
    <alternativeName>
        <fullName evidence="1">PreQ(0) reductase</fullName>
    </alternativeName>
</protein>
<gene>
    <name evidence="1" type="primary">queF</name>
    <name type="ordered locus">trd_1679</name>
</gene>
<keyword id="KW-0963">Cytoplasm</keyword>
<keyword id="KW-0521">NADP</keyword>
<keyword id="KW-0560">Oxidoreductase</keyword>
<keyword id="KW-0671">Queuosine biosynthesis</keyword>
<keyword id="KW-1185">Reference proteome</keyword>
<proteinExistence type="inferred from homology"/>
<reference key="1">
    <citation type="journal article" date="2009" name="PLoS ONE">
        <title>Complete genome sequence of the aerobic CO-oxidizing thermophile Thermomicrobium roseum.</title>
        <authorList>
            <person name="Wu D."/>
            <person name="Raymond J."/>
            <person name="Wu M."/>
            <person name="Chatterji S."/>
            <person name="Ren Q."/>
            <person name="Graham J.E."/>
            <person name="Bryant D.A."/>
            <person name="Robb F."/>
            <person name="Colman A."/>
            <person name="Tallon L.J."/>
            <person name="Badger J.H."/>
            <person name="Madupu R."/>
            <person name="Ward N.L."/>
            <person name="Eisen J.A."/>
        </authorList>
    </citation>
    <scope>NUCLEOTIDE SEQUENCE [LARGE SCALE GENOMIC DNA]</scope>
    <source>
        <strain>ATCC 27502 / DSM 5159 / P-2</strain>
    </source>
</reference>
<feature type="chain" id="PRO_1000148676" description="NADPH-dependent 7-cyano-7-deazaguanine reductase">
    <location>
        <begin position="1"/>
        <end position="128"/>
    </location>
</feature>
<feature type="active site" description="Thioimide intermediate" evidence="1">
    <location>
        <position position="34"/>
    </location>
</feature>
<feature type="active site" description="Proton donor" evidence="1">
    <location>
        <position position="41"/>
    </location>
</feature>
<feature type="binding site" evidence="1">
    <location>
        <begin position="56"/>
        <end position="58"/>
    </location>
    <ligand>
        <name>substrate</name>
    </ligand>
</feature>
<feature type="binding site" evidence="1">
    <location>
        <begin position="75"/>
        <end position="76"/>
    </location>
    <ligand>
        <name>substrate</name>
    </ligand>
</feature>
<name>QUEF_THERP</name>
<accession>B9L0W9</accession>